<proteinExistence type="inferred from homology"/>
<sequence>MTIYLPELEQEHDASFPDIESALHDPDGLLAMGGDLTPKRLLLAYSHGIFPWYSNDDPILWWSPSIRGVFIPENYTPSKSLKKFFKKSGYSITINHATSDVISLCASTRPAEETWIMPEMIEAYQNLAKLGHCHSVEVWFNNELVGGLYGLQIGQVFCGESMFSIKTNASKIALWKFCEHFVAFGGKLIDCQMMNPHLESLGAIPMERPIFNERLQVFSAISVFENCYQPQSLSNG</sequence>
<feature type="chain" id="PRO_1000131902" description="Leucyl/phenylalanyl-tRNA--protein transferase">
    <location>
        <begin position="1"/>
        <end position="236"/>
    </location>
</feature>
<reference key="1">
    <citation type="journal article" date="2008" name="BMC Genomics">
        <title>The genome sequence of the fish pathogen Aliivibrio salmonicida strain LFI1238 shows extensive evidence of gene decay.</title>
        <authorList>
            <person name="Hjerde E."/>
            <person name="Lorentzen M.S."/>
            <person name="Holden M.T."/>
            <person name="Seeger K."/>
            <person name="Paulsen S."/>
            <person name="Bason N."/>
            <person name="Churcher C."/>
            <person name="Harris D."/>
            <person name="Norbertczak H."/>
            <person name="Quail M.A."/>
            <person name="Sanders S."/>
            <person name="Thurston S."/>
            <person name="Parkhill J."/>
            <person name="Willassen N.P."/>
            <person name="Thomson N.R."/>
        </authorList>
    </citation>
    <scope>NUCLEOTIDE SEQUENCE [LARGE SCALE GENOMIC DNA]</scope>
    <source>
        <strain>LFI1238</strain>
    </source>
</reference>
<keyword id="KW-0012">Acyltransferase</keyword>
<keyword id="KW-0963">Cytoplasm</keyword>
<keyword id="KW-0808">Transferase</keyword>
<comment type="function">
    <text evidence="1">Functions in the N-end rule pathway of protein degradation where it conjugates Leu, Phe and, less efficiently, Met from aminoacyl-tRNAs to the N-termini of proteins containing an N-terminal arginine or lysine.</text>
</comment>
<comment type="catalytic activity">
    <reaction evidence="1">
        <text>N-terminal L-lysyl-[protein] + L-leucyl-tRNA(Leu) = N-terminal L-leucyl-L-lysyl-[protein] + tRNA(Leu) + H(+)</text>
        <dbReference type="Rhea" id="RHEA:12340"/>
        <dbReference type="Rhea" id="RHEA-COMP:9613"/>
        <dbReference type="Rhea" id="RHEA-COMP:9622"/>
        <dbReference type="Rhea" id="RHEA-COMP:12670"/>
        <dbReference type="Rhea" id="RHEA-COMP:12671"/>
        <dbReference type="ChEBI" id="CHEBI:15378"/>
        <dbReference type="ChEBI" id="CHEBI:65249"/>
        <dbReference type="ChEBI" id="CHEBI:78442"/>
        <dbReference type="ChEBI" id="CHEBI:78494"/>
        <dbReference type="ChEBI" id="CHEBI:133043"/>
        <dbReference type="EC" id="2.3.2.6"/>
    </reaction>
</comment>
<comment type="catalytic activity">
    <reaction evidence="1">
        <text>N-terminal L-arginyl-[protein] + L-leucyl-tRNA(Leu) = N-terminal L-leucyl-L-arginyl-[protein] + tRNA(Leu) + H(+)</text>
        <dbReference type="Rhea" id="RHEA:50416"/>
        <dbReference type="Rhea" id="RHEA-COMP:9613"/>
        <dbReference type="Rhea" id="RHEA-COMP:9622"/>
        <dbReference type="Rhea" id="RHEA-COMP:12672"/>
        <dbReference type="Rhea" id="RHEA-COMP:12673"/>
        <dbReference type="ChEBI" id="CHEBI:15378"/>
        <dbReference type="ChEBI" id="CHEBI:64719"/>
        <dbReference type="ChEBI" id="CHEBI:78442"/>
        <dbReference type="ChEBI" id="CHEBI:78494"/>
        <dbReference type="ChEBI" id="CHEBI:133044"/>
        <dbReference type="EC" id="2.3.2.6"/>
    </reaction>
</comment>
<comment type="catalytic activity">
    <reaction evidence="1">
        <text>L-phenylalanyl-tRNA(Phe) + an N-terminal L-alpha-aminoacyl-[protein] = an N-terminal L-phenylalanyl-L-alpha-aminoacyl-[protein] + tRNA(Phe)</text>
        <dbReference type="Rhea" id="RHEA:43632"/>
        <dbReference type="Rhea" id="RHEA-COMP:9668"/>
        <dbReference type="Rhea" id="RHEA-COMP:9699"/>
        <dbReference type="Rhea" id="RHEA-COMP:10636"/>
        <dbReference type="Rhea" id="RHEA-COMP:10637"/>
        <dbReference type="ChEBI" id="CHEBI:78442"/>
        <dbReference type="ChEBI" id="CHEBI:78531"/>
        <dbReference type="ChEBI" id="CHEBI:78597"/>
        <dbReference type="ChEBI" id="CHEBI:83561"/>
        <dbReference type="EC" id="2.3.2.6"/>
    </reaction>
</comment>
<comment type="subcellular location">
    <subcellularLocation>
        <location evidence="1">Cytoplasm</location>
    </subcellularLocation>
</comment>
<comment type="similarity">
    <text evidence="1">Belongs to the L/F-transferase family.</text>
</comment>
<accession>B6EIX7</accession>
<dbReference type="EC" id="2.3.2.6" evidence="1"/>
<dbReference type="EMBL" id="FM178379">
    <property type="protein sequence ID" value="CAQ79902.1"/>
    <property type="molecule type" value="Genomic_DNA"/>
</dbReference>
<dbReference type="RefSeq" id="WP_012550732.1">
    <property type="nucleotide sequence ID" value="NC_011312.1"/>
</dbReference>
<dbReference type="SMR" id="B6EIX7"/>
<dbReference type="KEGG" id="vsa:VSAL_I2217"/>
<dbReference type="eggNOG" id="COG2360">
    <property type="taxonomic scope" value="Bacteria"/>
</dbReference>
<dbReference type="HOGENOM" id="CLU_075045_0_0_6"/>
<dbReference type="Proteomes" id="UP000001730">
    <property type="component" value="Chromosome 1"/>
</dbReference>
<dbReference type="GO" id="GO:0005737">
    <property type="term" value="C:cytoplasm"/>
    <property type="evidence" value="ECO:0007669"/>
    <property type="project" value="UniProtKB-SubCell"/>
</dbReference>
<dbReference type="GO" id="GO:0008914">
    <property type="term" value="F:leucyl-tRNA--protein transferase activity"/>
    <property type="evidence" value="ECO:0007669"/>
    <property type="project" value="UniProtKB-UniRule"/>
</dbReference>
<dbReference type="GO" id="GO:0030163">
    <property type="term" value="P:protein catabolic process"/>
    <property type="evidence" value="ECO:0007669"/>
    <property type="project" value="UniProtKB-UniRule"/>
</dbReference>
<dbReference type="FunFam" id="3.30.70.3550:FF:000001">
    <property type="entry name" value="Leucyl/phenylalanyl-tRNA--protein transferase"/>
    <property type="match status" value="1"/>
</dbReference>
<dbReference type="Gene3D" id="3.40.630.70">
    <property type="entry name" value="Leucyl/phenylalanyl-tRNA-protein transferase, C-terminal domain"/>
    <property type="match status" value="1"/>
</dbReference>
<dbReference type="Gene3D" id="3.30.70.3550">
    <property type="entry name" value="Leucyl/phenylalanyl-tRNA-protein transferase, N-terminal domain"/>
    <property type="match status" value="1"/>
</dbReference>
<dbReference type="HAMAP" id="MF_00688">
    <property type="entry name" value="Leu_Phe_trans"/>
    <property type="match status" value="1"/>
</dbReference>
<dbReference type="InterPro" id="IPR016181">
    <property type="entry name" value="Acyl_CoA_acyltransferase"/>
</dbReference>
<dbReference type="InterPro" id="IPR004616">
    <property type="entry name" value="Leu/Phe-tRNA_Trfase"/>
</dbReference>
<dbReference type="InterPro" id="IPR042203">
    <property type="entry name" value="Leu/Phe-tRNA_Trfase_C"/>
</dbReference>
<dbReference type="InterPro" id="IPR042221">
    <property type="entry name" value="Leu/Phe-tRNA_Trfase_N"/>
</dbReference>
<dbReference type="NCBIfam" id="TIGR00667">
    <property type="entry name" value="aat"/>
    <property type="match status" value="1"/>
</dbReference>
<dbReference type="PANTHER" id="PTHR30098">
    <property type="entry name" value="LEUCYL/PHENYLALANYL-TRNA--PROTEIN TRANSFERASE"/>
    <property type="match status" value="1"/>
</dbReference>
<dbReference type="PANTHER" id="PTHR30098:SF2">
    <property type="entry name" value="LEUCYL_PHENYLALANYL-TRNA--PROTEIN TRANSFERASE"/>
    <property type="match status" value="1"/>
</dbReference>
<dbReference type="Pfam" id="PF03588">
    <property type="entry name" value="Leu_Phe_trans"/>
    <property type="match status" value="1"/>
</dbReference>
<dbReference type="SUPFAM" id="SSF55729">
    <property type="entry name" value="Acyl-CoA N-acyltransferases (Nat)"/>
    <property type="match status" value="1"/>
</dbReference>
<gene>
    <name evidence="1" type="primary">aat</name>
    <name type="ordered locus">VSAL_I2217</name>
</gene>
<name>LFTR_ALISL</name>
<evidence type="ECO:0000255" key="1">
    <source>
        <dbReference type="HAMAP-Rule" id="MF_00688"/>
    </source>
</evidence>
<organism>
    <name type="scientific">Aliivibrio salmonicida (strain LFI1238)</name>
    <name type="common">Vibrio salmonicida (strain LFI1238)</name>
    <dbReference type="NCBI Taxonomy" id="316275"/>
    <lineage>
        <taxon>Bacteria</taxon>
        <taxon>Pseudomonadati</taxon>
        <taxon>Pseudomonadota</taxon>
        <taxon>Gammaproteobacteria</taxon>
        <taxon>Vibrionales</taxon>
        <taxon>Vibrionaceae</taxon>
        <taxon>Aliivibrio</taxon>
    </lineage>
</organism>
<protein>
    <recommendedName>
        <fullName evidence="1">Leucyl/phenylalanyl-tRNA--protein transferase</fullName>
        <ecNumber evidence="1">2.3.2.6</ecNumber>
    </recommendedName>
    <alternativeName>
        <fullName evidence="1">L/F-transferase</fullName>
    </alternativeName>
    <alternativeName>
        <fullName evidence="1">Leucyltransferase</fullName>
    </alternativeName>
    <alternativeName>
        <fullName evidence="1">Phenyalanyltransferase</fullName>
    </alternativeName>
</protein>